<evidence type="ECO:0000255" key="1">
    <source>
        <dbReference type="HAMAP-Rule" id="MF_00686"/>
    </source>
</evidence>
<protein>
    <recommendedName>
        <fullName evidence="1">Probable Fe(2+)-trafficking protein</fullName>
    </recommendedName>
</protein>
<keyword id="KW-0408">Iron</keyword>
<accession>C3K6U5</accession>
<name>FETP_PSEFS</name>
<proteinExistence type="inferred from homology"/>
<comment type="function">
    <text evidence="1">Could be a mediator in iron transactions between iron acquisition and iron-requiring processes, such as synthesis and/or repair of Fe-S clusters in biosynthetic enzymes.</text>
</comment>
<comment type="similarity">
    <text evidence="1">Belongs to the Fe(2+)-trafficking protein family.</text>
</comment>
<sequence length="90" mass="10406">MTRTIICRKYKEELPGLERPPYPGAKGQDIFDHVSAKAWGDWLKHQTLLINEKRLNMMNAEDRKYLAGEMDKFFSGEEYAKADGYVPPAQ</sequence>
<reference key="1">
    <citation type="journal article" date="2009" name="Genome Biol.">
        <title>Genomic and genetic analyses of diversity and plant interactions of Pseudomonas fluorescens.</title>
        <authorList>
            <person name="Silby M.W."/>
            <person name="Cerdeno-Tarraga A.M."/>
            <person name="Vernikos G.S."/>
            <person name="Giddens S.R."/>
            <person name="Jackson R.W."/>
            <person name="Preston G.M."/>
            <person name="Zhang X.-X."/>
            <person name="Moon C.D."/>
            <person name="Gehrig S.M."/>
            <person name="Godfrey S.A.C."/>
            <person name="Knight C.G."/>
            <person name="Malone J.G."/>
            <person name="Robinson Z."/>
            <person name="Spiers A.J."/>
            <person name="Harris S."/>
            <person name="Challis G.L."/>
            <person name="Yaxley A.M."/>
            <person name="Harris D."/>
            <person name="Seeger K."/>
            <person name="Murphy L."/>
            <person name="Rutter S."/>
            <person name="Squares R."/>
            <person name="Quail M.A."/>
            <person name="Saunders E."/>
            <person name="Mavromatis K."/>
            <person name="Brettin T.S."/>
            <person name="Bentley S.D."/>
            <person name="Hothersall J."/>
            <person name="Stephens E."/>
            <person name="Thomas C.M."/>
            <person name="Parkhill J."/>
            <person name="Levy S.B."/>
            <person name="Rainey P.B."/>
            <person name="Thomson N.R."/>
        </authorList>
    </citation>
    <scope>NUCLEOTIDE SEQUENCE [LARGE SCALE GENOMIC DNA]</scope>
    <source>
        <strain>SBW25</strain>
    </source>
</reference>
<dbReference type="EMBL" id="AM181176">
    <property type="protein sequence ID" value="CAY46600.1"/>
    <property type="molecule type" value="Genomic_DNA"/>
</dbReference>
<dbReference type="RefSeq" id="WP_012721742.1">
    <property type="nucleotide sequence ID" value="NC_012660.1"/>
</dbReference>
<dbReference type="SMR" id="C3K6U5"/>
<dbReference type="STRING" id="294.SRM1_00372"/>
<dbReference type="eggNOG" id="COG2924">
    <property type="taxonomic scope" value="Bacteria"/>
</dbReference>
<dbReference type="HOGENOM" id="CLU_170994_0_0_6"/>
<dbReference type="OrthoDB" id="9804318at2"/>
<dbReference type="GO" id="GO:0005829">
    <property type="term" value="C:cytosol"/>
    <property type="evidence" value="ECO:0007669"/>
    <property type="project" value="TreeGrafter"/>
</dbReference>
<dbReference type="GO" id="GO:0005506">
    <property type="term" value="F:iron ion binding"/>
    <property type="evidence" value="ECO:0007669"/>
    <property type="project" value="UniProtKB-UniRule"/>
</dbReference>
<dbReference type="GO" id="GO:0034599">
    <property type="term" value="P:cellular response to oxidative stress"/>
    <property type="evidence" value="ECO:0007669"/>
    <property type="project" value="TreeGrafter"/>
</dbReference>
<dbReference type="FunFam" id="1.10.3880.10:FF:000001">
    <property type="entry name" value="Probable Fe(2+)-trafficking protein"/>
    <property type="match status" value="1"/>
</dbReference>
<dbReference type="Gene3D" id="1.10.3880.10">
    <property type="entry name" value="Fe(II) trafficking protein YggX"/>
    <property type="match status" value="1"/>
</dbReference>
<dbReference type="HAMAP" id="MF_00686">
    <property type="entry name" value="Fe_traffic_YggX"/>
    <property type="match status" value="1"/>
</dbReference>
<dbReference type="InterPro" id="IPR007457">
    <property type="entry name" value="Fe_traffick_prot_YggX"/>
</dbReference>
<dbReference type="InterPro" id="IPR036766">
    <property type="entry name" value="Fe_traffick_prot_YggX_sf"/>
</dbReference>
<dbReference type="NCBIfam" id="NF003817">
    <property type="entry name" value="PRK05408.1"/>
    <property type="match status" value="1"/>
</dbReference>
<dbReference type="PANTHER" id="PTHR36965">
    <property type="entry name" value="FE(2+)-TRAFFICKING PROTEIN-RELATED"/>
    <property type="match status" value="1"/>
</dbReference>
<dbReference type="PANTHER" id="PTHR36965:SF1">
    <property type="entry name" value="FE(2+)-TRAFFICKING PROTEIN-RELATED"/>
    <property type="match status" value="1"/>
</dbReference>
<dbReference type="Pfam" id="PF04362">
    <property type="entry name" value="Iron_traffic"/>
    <property type="match status" value="1"/>
</dbReference>
<dbReference type="PIRSF" id="PIRSF029827">
    <property type="entry name" value="Fe_traffic_YggX"/>
    <property type="match status" value="1"/>
</dbReference>
<dbReference type="SUPFAM" id="SSF111148">
    <property type="entry name" value="YggX-like"/>
    <property type="match status" value="1"/>
</dbReference>
<organism>
    <name type="scientific">Pseudomonas fluorescens (strain SBW25)</name>
    <dbReference type="NCBI Taxonomy" id="216595"/>
    <lineage>
        <taxon>Bacteria</taxon>
        <taxon>Pseudomonadati</taxon>
        <taxon>Pseudomonadota</taxon>
        <taxon>Gammaproteobacteria</taxon>
        <taxon>Pseudomonadales</taxon>
        <taxon>Pseudomonadaceae</taxon>
        <taxon>Pseudomonas</taxon>
    </lineage>
</organism>
<feature type="chain" id="PRO_1000212556" description="Probable Fe(2+)-trafficking protein">
    <location>
        <begin position="1"/>
        <end position="90"/>
    </location>
</feature>
<gene>
    <name type="ordered locus">PFLU_0322</name>
</gene>